<name>MCCA_WOLSU</name>
<feature type="signal peptide" evidence="1">
    <location>
        <begin position="1"/>
        <end position="39"/>
    </location>
</feature>
<feature type="chain" id="PRO_0000432940" description="Dissimilatory sulfite reductase MccA">
    <location>
        <begin position="40"/>
        <end position="702"/>
    </location>
</feature>
<feature type="binding site" description="covalent" evidence="11">
    <location>
        <position position="155"/>
    </location>
    <ligand>
        <name>heme c</name>
        <dbReference type="ChEBI" id="CHEBI:61717"/>
        <label>1</label>
    </ligand>
</feature>
<feature type="binding site" description="covalent" evidence="11">
    <location>
        <position position="158"/>
    </location>
    <ligand>
        <name>heme c</name>
        <dbReference type="ChEBI" id="CHEBI:61717"/>
        <label>1</label>
    </ligand>
</feature>
<feature type="binding site" description="axial binding residue" evidence="11">
    <location>
        <position position="159"/>
    </location>
    <ligand>
        <name>heme c</name>
        <dbReference type="ChEBI" id="CHEBI:61717"/>
        <label>1</label>
    </ligand>
    <ligandPart>
        <name>Fe</name>
        <dbReference type="ChEBI" id="CHEBI:18248"/>
    </ligandPart>
</feature>
<feature type="binding site" description="axial binding residue" evidence="11">
    <location>
        <position position="171"/>
    </location>
    <ligand>
        <name>heme c</name>
        <dbReference type="ChEBI" id="CHEBI:61717"/>
        <label>4</label>
    </ligand>
    <ligandPart>
        <name>Fe</name>
        <dbReference type="ChEBI" id="CHEBI:18248"/>
    </ligandPart>
</feature>
<feature type="binding site" evidence="11">
    <location>
        <position position="220"/>
    </location>
    <ligand>
        <name>substrate</name>
    </ligand>
</feature>
<feature type="binding site" evidence="11">
    <location>
        <position position="297"/>
    </location>
    <ligand>
        <name>substrate</name>
    </ligand>
</feature>
<feature type="binding site" description="covalent" evidence="6">
    <location>
        <position position="314"/>
    </location>
    <ligand>
        <name>heme c</name>
        <dbReference type="ChEBI" id="CHEBI:61717"/>
        <label>2</label>
    </ligand>
</feature>
<feature type="binding site" description="covalent" evidence="11">
    <location>
        <position position="317"/>
    </location>
    <ligand>
        <name>heme c</name>
        <dbReference type="ChEBI" id="CHEBI:61717"/>
        <label>2</label>
    </ligand>
</feature>
<feature type="binding site" description="axial binding residue" evidence="11">
    <location>
        <position position="318"/>
    </location>
    <ligand>
        <name>heme c</name>
        <dbReference type="ChEBI" id="CHEBI:61717"/>
        <label>2</label>
    </ligand>
    <ligandPart>
        <name>Fe</name>
        <dbReference type="ChEBI" id="CHEBI:18248"/>
    </ligandPart>
</feature>
<feature type="binding site" description="covalent" evidence="11">
    <location>
        <position position="351"/>
    </location>
    <ligand>
        <name>heme c</name>
        <dbReference type="ChEBI" id="CHEBI:61717"/>
        <label>3</label>
    </ligand>
</feature>
<feature type="binding site" description="covalent" evidence="11">
    <location>
        <position position="354"/>
    </location>
    <ligand>
        <name>heme c</name>
        <dbReference type="ChEBI" id="CHEBI:61717"/>
        <label>3</label>
    </ligand>
</feature>
<feature type="binding site" description="axial binding residue" evidence="11">
    <location>
        <position position="355"/>
    </location>
    <ligand>
        <name>heme c</name>
        <dbReference type="ChEBI" id="CHEBI:61717"/>
        <label>3</label>
    </ligand>
    <ligandPart>
        <name>Fe</name>
        <dbReference type="ChEBI" id="CHEBI:18248"/>
    </ligandPart>
</feature>
<feature type="binding site" description="axial binding residue" evidence="11">
    <location>
        <position position="360"/>
    </location>
    <ligand>
        <name>heme c</name>
        <dbReference type="ChEBI" id="CHEBI:61717"/>
        <label>1</label>
    </ligand>
    <ligandPart>
        <name>Fe</name>
        <dbReference type="ChEBI" id="CHEBI:18248"/>
    </ligandPart>
</feature>
<feature type="binding site" description="covalent" evidence="11">
    <location>
        <position position="372"/>
    </location>
    <ligand>
        <name>heme c</name>
        <dbReference type="ChEBI" id="CHEBI:61717"/>
        <label>4</label>
    </ligand>
</feature>
<feature type="binding site" description="covalent" evidence="11">
    <location>
        <position position="375"/>
    </location>
    <ligand>
        <name>heme c</name>
        <dbReference type="ChEBI" id="CHEBI:61717"/>
        <label>4</label>
    </ligand>
</feature>
<feature type="binding site" description="axial binding residue" evidence="11">
    <location>
        <position position="376"/>
    </location>
    <ligand>
        <name>heme c</name>
        <dbReference type="ChEBI" id="CHEBI:61717"/>
        <label>4</label>
    </ligand>
    <ligandPart>
        <name>Fe</name>
        <dbReference type="ChEBI" id="CHEBI:18248"/>
    </ligandPart>
</feature>
<feature type="binding site" evidence="11">
    <location>
        <position position="378"/>
    </location>
    <ligand>
        <name>substrate</name>
    </ligand>
</feature>
<feature type="binding site" evidence="3 10">
    <location>
        <position position="411"/>
    </location>
    <ligand>
        <name>Cu(+)</name>
        <dbReference type="ChEBI" id="CHEBI:49552"/>
    </ligand>
</feature>
<feature type="binding site" description="axial binding residue" evidence="11">
    <location>
        <position position="423"/>
    </location>
    <ligand>
        <name>heme c</name>
        <dbReference type="ChEBI" id="CHEBI:61717"/>
        <label>6</label>
    </ligand>
    <ligandPart>
        <name>Fe</name>
        <dbReference type="ChEBI" id="CHEBI:18248"/>
    </ligandPart>
</feature>
<feature type="binding site" description="covalent" evidence="11">
    <location>
        <position position="430"/>
    </location>
    <ligand>
        <name>heme c</name>
        <dbReference type="ChEBI" id="CHEBI:61717"/>
        <label>5</label>
    </ligand>
</feature>
<feature type="binding site" description="covalent" evidence="11">
    <location>
        <position position="433"/>
    </location>
    <ligand>
        <name>heme c</name>
        <dbReference type="ChEBI" id="CHEBI:61717"/>
        <label>5</label>
    </ligand>
</feature>
<feature type="binding site" description="axial binding residue" evidence="11">
    <location>
        <position position="434"/>
    </location>
    <ligand>
        <name>heme c</name>
        <dbReference type="ChEBI" id="CHEBI:61717"/>
        <label>5</label>
    </ligand>
    <ligandPart>
        <name>Fe</name>
        <dbReference type="ChEBI" id="CHEBI:18248"/>
    </ligandPart>
</feature>
<feature type="binding site" description="axial binding residue" evidence="11">
    <location>
        <position position="437"/>
    </location>
    <ligand>
        <name>heme c</name>
        <dbReference type="ChEBI" id="CHEBI:61717"/>
        <label>3</label>
    </ligand>
    <ligandPart>
        <name>Fe</name>
        <dbReference type="ChEBI" id="CHEBI:18248"/>
    </ligandPart>
</feature>
<feature type="binding site" description="covalent" evidence="11">
    <location>
        <position position="474"/>
    </location>
    <ligand>
        <name>heme c</name>
        <dbReference type="ChEBI" id="CHEBI:61717"/>
        <label>6</label>
    </ligand>
</feature>
<feature type="binding site" description="covalent" evidence="11">
    <location>
        <position position="477"/>
    </location>
    <ligand>
        <name>heme c</name>
        <dbReference type="ChEBI" id="CHEBI:61717"/>
        <label>6</label>
    </ligand>
</feature>
<feature type="binding site" description="axial binding residue" evidence="11">
    <location>
        <position position="478"/>
    </location>
    <ligand>
        <name>heme c</name>
        <dbReference type="ChEBI" id="CHEBI:61717"/>
        <label>6</label>
    </ligand>
    <ligandPart>
        <name>Fe</name>
        <dbReference type="ChEBI" id="CHEBI:18248"/>
    </ligandPart>
</feature>
<feature type="binding site" description="axial binding residue" evidence="11">
    <location>
        <position position="491"/>
    </location>
    <ligand>
        <name>heme c</name>
        <dbReference type="ChEBI" id="CHEBI:61717"/>
        <label>8</label>
    </ligand>
    <ligandPart>
        <name>Fe</name>
        <dbReference type="ChEBI" id="CHEBI:18248"/>
    </ligandPart>
</feature>
<feature type="binding site" description="covalent" evidence="11">
    <location>
        <position position="496"/>
    </location>
    <ligand>
        <name>heme c</name>
        <dbReference type="ChEBI" id="CHEBI:61717"/>
        <label>7</label>
    </ligand>
</feature>
<feature type="binding site" description="covalent" evidence="11">
    <location>
        <position position="499"/>
    </location>
    <ligand>
        <name>heme c</name>
        <dbReference type="ChEBI" id="CHEBI:61717"/>
        <label>7</label>
    </ligand>
</feature>
<feature type="binding site" description="axial binding residue" evidence="11">
    <location>
        <position position="500"/>
    </location>
    <ligand>
        <name>heme c</name>
        <dbReference type="ChEBI" id="CHEBI:61717"/>
        <label>7</label>
    </ligand>
    <ligandPart>
        <name>Fe</name>
        <dbReference type="ChEBI" id="CHEBI:18248"/>
    </ligandPart>
</feature>
<feature type="binding site" evidence="3 10">
    <location>
        <position position="507"/>
    </location>
    <ligand>
        <name>Cu(+)</name>
        <dbReference type="ChEBI" id="CHEBI:49552"/>
    </ligand>
</feature>
<feature type="binding site" description="axial binding residue" evidence="11">
    <location>
        <position position="528"/>
    </location>
    <ligand>
        <name>heme c</name>
        <dbReference type="ChEBI" id="CHEBI:61717"/>
        <label>5</label>
    </ligand>
    <ligandPart>
        <name>Fe</name>
        <dbReference type="ChEBI" id="CHEBI:18248"/>
    </ligandPart>
</feature>
<feature type="binding site" description="covalent" evidence="11">
    <location>
        <position position="574"/>
    </location>
    <ligand>
        <name>heme c</name>
        <dbReference type="ChEBI" id="CHEBI:61717"/>
        <label>8</label>
    </ligand>
</feature>
<feature type="binding site" description="covalent" evidence="11">
    <location>
        <position position="590"/>
    </location>
    <ligand>
        <name>heme c</name>
        <dbReference type="ChEBI" id="CHEBI:61717"/>
        <label>8</label>
    </ligand>
</feature>
<feature type="binding site" description="axial binding residue" evidence="11">
    <location>
        <position position="591"/>
    </location>
    <ligand>
        <name>heme c</name>
        <dbReference type="ChEBI" id="CHEBI:61717"/>
        <label>8</label>
    </ligand>
    <ligandPart>
        <name>Fe</name>
        <dbReference type="ChEBI" id="CHEBI:18248"/>
    </ligandPart>
</feature>
<feature type="binding site" description="axial binding residue" evidence="11">
    <location>
        <position position="675"/>
    </location>
    <ligand>
        <name>heme c</name>
        <dbReference type="ChEBI" id="CHEBI:61717"/>
        <label>7</label>
    </ligand>
    <ligandPart>
        <name>Fe</name>
        <dbReference type="ChEBI" id="CHEBI:18248"/>
    </ligandPart>
</feature>
<feature type="mutagenesis site" description="Impairs protein stability and abolishes sulfite reductase activity; when associated with C-587." evidence="2">
    <original>C</original>
    <variation>A</variation>
    <location>
        <position position="574"/>
    </location>
</feature>
<feature type="mutagenesis site" description="Impairs protein stability and abolishes sulfite reductase activity; when associated with A-574." evidence="2">
    <original>A</original>
    <variation>C</variation>
    <location>
        <position position="587"/>
    </location>
</feature>
<feature type="mutagenesis site" description="No effect on protein stability and sulfite reductase activity." evidence="2">
    <original>A</original>
    <variation>S</variation>
    <location>
        <position position="587"/>
    </location>
</feature>
<feature type="mutagenesis site" description="Impairs protein stability." evidence="2">
    <original>C</original>
    <variation>A</variation>
    <variation>S</variation>
    <location>
        <position position="590"/>
    </location>
</feature>
<feature type="mutagenesis site" description="Impairs protein stability." evidence="2">
    <original>H</original>
    <variation>A</variation>
    <location>
        <position position="591"/>
    </location>
</feature>
<feature type="helix" evidence="12">
    <location>
        <begin position="47"/>
        <end position="54"/>
    </location>
</feature>
<feature type="helix" evidence="12">
    <location>
        <begin position="60"/>
        <end position="63"/>
    </location>
</feature>
<feature type="helix" evidence="12">
    <location>
        <begin position="68"/>
        <end position="74"/>
    </location>
</feature>
<feature type="helix" evidence="12">
    <location>
        <begin position="76"/>
        <end position="85"/>
    </location>
</feature>
<feature type="helix" evidence="12">
    <location>
        <begin position="87"/>
        <end position="90"/>
    </location>
</feature>
<feature type="turn" evidence="12">
    <location>
        <begin position="91"/>
        <end position="94"/>
    </location>
</feature>
<feature type="strand" evidence="12">
    <location>
        <begin position="96"/>
        <end position="102"/>
    </location>
</feature>
<feature type="helix" evidence="12">
    <location>
        <begin position="105"/>
        <end position="108"/>
    </location>
</feature>
<feature type="turn" evidence="12">
    <location>
        <begin position="109"/>
        <end position="111"/>
    </location>
</feature>
<feature type="helix" evidence="12">
    <location>
        <begin position="112"/>
        <end position="114"/>
    </location>
</feature>
<feature type="helix" evidence="12">
    <location>
        <begin position="115"/>
        <end position="121"/>
    </location>
</feature>
<feature type="helix" evidence="12">
    <location>
        <begin position="124"/>
        <end position="127"/>
    </location>
</feature>
<feature type="strand" evidence="12">
    <location>
        <begin position="144"/>
        <end position="146"/>
    </location>
</feature>
<feature type="helix" evidence="12">
    <location>
        <begin position="152"/>
        <end position="158"/>
    </location>
</feature>
<feature type="helix" evidence="12">
    <location>
        <begin position="160"/>
        <end position="167"/>
    </location>
</feature>
<feature type="helix" evidence="12">
    <location>
        <begin position="170"/>
        <end position="173"/>
    </location>
</feature>
<feature type="strand" evidence="12">
    <location>
        <begin position="174"/>
        <end position="176"/>
    </location>
</feature>
<feature type="helix" evidence="12">
    <location>
        <begin position="182"/>
        <end position="184"/>
    </location>
</feature>
<feature type="strand" evidence="12">
    <location>
        <begin position="188"/>
        <end position="190"/>
    </location>
</feature>
<feature type="strand" evidence="12">
    <location>
        <begin position="192"/>
        <end position="194"/>
    </location>
</feature>
<feature type="helix" evidence="12">
    <location>
        <begin position="207"/>
        <end position="209"/>
    </location>
</feature>
<feature type="strand" evidence="12">
    <location>
        <begin position="210"/>
        <end position="215"/>
    </location>
</feature>
<feature type="strand" evidence="12">
    <location>
        <begin position="219"/>
        <end position="225"/>
    </location>
</feature>
<feature type="strand" evidence="12">
    <location>
        <begin position="233"/>
        <end position="238"/>
    </location>
</feature>
<feature type="helix" evidence="12">
    <location>
        <begin position="240"/>
        <end position="242"/>
    </location>
</feature>
<feature type="strand" evidence="12">
    <location>
        <begin position="245"/>
        <end position="250"/>
    </location>
</feature>
<feature type="strand" evidence="12">
    <location>
        <begin position="253"/>
        <end position="255"/>
    </location>
</feature>
<feature type="helix" evidence="12">
    <location>
        <begin position="256"/>
        <end position="260"/>
    </location>
</feature>
<feature type="helix" evidence="12">
    <location>
        <begin position="264"/>
        <end position="273"/>
    </location>
</feature>
<feature type="helix" evidence="12">
    <location>
        <begin position="281"/>
        <end position="287"/>
    </location>
</feature>
<feature type="strand" evidence="12">
    <location>
        <begin position="297"/>
        <end position="300"/>
    </location>
</feature>
<feature type="turn" evidence="12">
    <location>
        <begin position="301"/>
        <end position="303"/>
    </location>
</feature>
<feature type="strand" evidence="12">
    <location>
        <begin position="304"/>
        <end position="307"/>
    </location>
</feature>
<feature type="helix" evidence="12">
    <location>
        <begin position="310"/>
        <end position="312"/>
    </location>
</feature>
<feature type="helix" evidence="12">
    <location>
        <begin position="314"/>
        <end position="317"/>
    </location>
</feature>
<feature type="strand" evidence="12">
    <location>
        <begin position="320"/>
        <end position="322"/>
    </location>
</feature>
<feature type="helix" evidence="12">
    <location>
        <begin position="327"/>
        <end position="333"/>
    </location>
</feature>
<feature type="helix" evidence="12">
    <location>
        <begin position="337"/>
        <end position="342"/>
    </location>
</feature>
<feature type="strand" evidence="12">
    <location>
        <begin position="344"/>
        <end position="349"/>
    </location>
</feature>
<feature type="helix" evidence="12">
    <location>
        <begin position="351"/>
        <end position="355"/>
    </location>
</feature>
<feature type="turn" evidence="12">
    <location>
        <begin position="357"/>
        <end position="360"/>
    </location>
</feature>
<feature type="helix" evidence="12">
    <location>
        <begin position="373"/>
        <end position="376"/>
    </location>
</feature>
<feature type="strand" evidence="12">
    <location>
        <begin position="379"/>
        <end position="381"/>
    </location>
</feature>
<feature type="helix" evidence="12">
    <location>
        <begin position="383"/>
        <end position="387"/>
    </location>
</feature>
<feature type="helix" evidence="12">
    <location>
        <begin position="390"/>
        <end position="392"/>
    </location>
</feature>
<feature type="helix" evidence="12">
    <location>
        <begin position="396"/>
        <end position="399"/>
    </location>
</feature>
<feature type="strand" evidence="12">
    <location>
        <begin position="400"/>
        <end position="402"/>
    </location>
</feature>
<feature type="strand" evidence="12">
    <location>
        <begin position="408"/>
        <end position="410"/>
    </location>
</feature>
<feature type="helix" evidence="12">
    <location>
        <begin position="414"/>
        <end position="419"/>
    </location>
</feature>
<feature type="helix" evidence="12">
    <location>
        <begin position="422"/>
        <end position="425"/>
    </location>
</feature>
<feature type="helix" evidence="12">
    <location>
        <begin position="430"/>
        <end position="433"/>
    </location>
</feature>
<feature type="helix" evidence="12">
    <location>
        <begin position="459"/>
        <end position="462"/>
    </location>
</feature>
<feature type="helix" evidence="12">
    <location>
        <begin position="474"/>
        <end position="477"/>
    </location>
</feature>
<feature type="helix" evidence="12">
    <location>
        <begin position="479"/>
        <end position="485"/>
    </location>
</feature>
<feature type="strand" evidence="12">
    <location>
        <begin position="487"/>
        <end position="489"/>
    </location>
</feature>
<feature type="turn" evidence="12">
    <location>
        <begin position="490"/>
        <end position="493"/>
    </location>
</feature>
<feature type="helix" evidence="12">
    <location>
        <begin position="496"/>
        <end position="500"/>
    </location>
</feature>
<feature type="strand" evidence="12">
    <location>
        <begin position="505"/>
        <end position="508"/>
    </location>
</feature>
<feature type="helix" evidence="12">
    <location>
        <begin position="511"/>
        <end position="513"/>
    </location>
</feature>
<feature type="helix" evidence="12">
    <location>
        <begin position="516"/>
        <end position="518"/>
    </location>
</feature>
<feature type="strand" evidence="12">
    <location>
        <begin position="540"/>
        <end position="542"/>
    </location>
</feature>
<feature type="helix" evidence="12">
    <location>
        <begin position="570"/>
        <end position="575"/>
    </location>
</feature>
<feature type="helix" evidence="12">
    <location>
        <begin position="582"/>
        <end position="586"/>
    </location>
</feature>
<feature type="turn" evidence="12">
    <location>
        <begin position="587"/>
        <end position="591"/>
    </location>
</feature>
<feature type="turn" evidence="12">
    <location>
        <begin position="593"/>
        <end position="595"/>
    </location>
</feature>
<feature type="helix" evidence="12">
    <location>
        <begin position="600"/>
        <end position="602"/>
    </location>
</feature>
<feature type="helix" evidence="12">
    <location>
        <begin position="607"/>
        <end position="638"/>
    </location>
</feature>
<feature type="strand" evidence="12">
    <location>
        <begin position="642"/>
        <end position="644"/>
    </location>
</feature>
<feature type="helix" evidence="12">
    <location>
        <begin position="646"/>
        <end position="669"/>
    </location>
</feature>
<feature type="turn" evidence="12">
    <location>
        <begin position="672"/>
        <end position="675"/>
    </location>
</feature>
<feature type="helix" evidence="12">
    <location>
        <begin position="677"/>
        <end position="700"/>
    </location>
</feature>
<comment type="function">
    <text evidence="2 3">Respiratory sulfite reductase that catalyzes the reduction of sulfite to sulfide in a single step, consuming six electrons in the process (PubMed:22040142, PubMed:25642962). Required for sulfite respiration under anaerobic growth conditions (PubMed:22040142). Has only marginal activity with nitrite.</text>
</comment>
<comment type="catalytic activity">
    <reaction evidence="2 3">
        <text>[protein]-disulfide + hydrogen sulfide + 2 A + 3 H2O = [protein]-dithiol + sulfite + 2 AH2 + H(+)</text>
        <dbReference type="Rhea" id="RHEA:51676"/>
        <dbReference type="Rhea" id="RHEA-COMP:10593"/>
        <dbReference type="Rhea" id="RHEA-COMP:10594"/>
        <dbReference type="ChEBI" id="CHEBI:13193"/>
        <dbReference type="ChEBI" id="CHEBI:15377"/>
        <dbReference type="ChEBI" id="CHEBI:15378"/>
        <dbReference type="ChEBI" id="CHEBI:17359"/>
        <dbReference type="ChEBI" id="CHEBI:17499"/>
        <dbReference type="ChEBI" id="CHEBI:29919"/>
        <dbReference type="ChEBI" id="CHEBI:29950"/>
        <dbReference type="ChEBI" id="CHEBI:50058"/>
    </reaction>
</comment>
<comment type="cofactor">
    <cofactor evidence="3">
        <name>Cu(+)</name>
        <dbReference type="ChEBI" id="CHEBI:49552"/>
    </cofactor>
    <text evidence="3">Exposure to oxygen reduces copper binding and leads to the formation of a disulfide bond between the two Cys residues that bind the copper ion.</text>
</comment>
<comment type="cofactor">
    <cofactor evidence="1 2 3">
        <name>heme c</name>
        <dbReference type="ChEBI" id="CHEBI:61717"/>
    </cofactor>
    <text evidence="1 3">Binds 8 heme c groups covalently per monomer.</text>
</comment>
<comment type="biophysicochemical properties">
    <kinetics>
        <KM evidence="3">44 uM for sulfite</KM>
        <Vmax evidence="3">151.0 umol/min/mg enzyme with sulfite as substrate</Vmax>
    </kinetics>
</comment>
<comment type="pathway">
    <text evidence="6">Sulfur metabolism; sulfite reduction.</text>
</comment>
<comment type="subunit">
    <text evidence="1 3">Homotrimer.</text>
</comment>
<comment type="interaction">
    <interactant intactId="EBI-16140995">
        <id>Q7MSJ8</id>
    </interactant>
    <interactant intactId="EBI-16140995">
        <id>Q7MSJ8</id>
        <label>mccA</label>
    </interactant>
    <organismsDiffer>false</organismsDiffer>
    <experiments>2</experiments>
</comment>
<comment type="subcellular location">
    <subcellularLocation>
        <location evidence="7">Periplasm</location>
    </subcellularLocation>
</comment>
<comment type="induction">
    <text evidence="2">Repressed by fumarate and nitrate. Up-regulated by sulfite, but only in the absence of fumarate and nitrate (at protein level).</text>
</comment>
<comment type="disruption phenotype">
    <text evidence="2">Loss of growth based on sulfite respiration.</text>
</comment>
<comment type="miscellaneous">
    <text evidence="3">The eighth heme binding site has an unusual CXXXXXCH motif.</text>
</comment>
<comment type="similarity">
    <text evidence="6">Belongs to the multiheme cytochrome c family.</text>
</comment>
<proteinExistence type="evidence at protein level"/>
<protein>
    <recommendedName>
        <fullName evidence="6">Dissimilatory sulfite reductase MccA</fullName>
        <ecNumber evidence="2 3">1.8.99.-</ecNumber>
    </recommendedName>
</protein>
<sequence length="702" mass="78939">MLSGWSVLKGGNMKYWDKALLSLFMCVSTLSIAATHAVAMEGMQMTKEAREIIAHPKGTKESRGVISLQDYIVEEQAMYDWLFKNHPIFTKYGGKTVGKLVVKDRGEEWIEEGRGNDFSKASKRSGGEGFSSMMYRVARNSTLQYPNKFIGPEKCGECHPAQYETWSRSRHATTIRFPGEHPEVNNKLNDPVFDKDTASILPQGITPDVVYCTVGHIRTKFGFFDAWLLRGTYHVEGGLLKNGTGQIVAGGNQWQRTWALNLSPEVAKKIKKWVPDFPVTLEEYGDNGGYVRGLASYAAKYKKSMSFQASTSYCEVCHPWKFDFKNESEFYAALGNAKELQKHTISKGVSCEECHGAGGHLEGGSGLLISNCERCHQRFSYSPDLMRNNPLNAGKPDLALSSKFKSMGPGCGSEGSQTYFTAHYEKGMRCATCHDPHDVTGNVTGEKGIKGVSYNSEQGYLSSLYSKPKLKKECTDCHKEQAYIQSKADTHSKNSCASCHMPFMMSCENFYAIQFQDQAGFDTQRRAHIWKIDVDPARKSLVAGSTSKDPRDGKDWHFERNEEGRNFVDLMWACARTTWADKDQAEAKGCHSPVVSELKETLHFKDQKQVYNEVMGWQTPVKDKFTQVKVGIQGLYSLLEVKKLAPSDKTRVYELIEKAQDTVDLIEKDGSWGMHGFKYTKQRLDAAVEYINEAQRIMKKSL</sequence>
<accession>Q7MSJ8</accession>
<dbReference type="EC" id="1.8.99.-" evidence="2 3"/>
<dbReference type="EMBL" id="BX571658">
    <property type="protein sequence ID" value="CAE09526.1"/>
    <property type="molecule type" value="Genomic_DNA"/>
</dbReference>
<dbReference type="PDB" id="4RKM">
    <property type="method" value="X-ray"/>
    <property type="resolution" value="2.20 A"/>
    <property type="chains" value="A/B/C/D/E/F/G/H/I/J/K/L=1-702"/>
</dbReference>
<dbReference type="PDB" id="4RKN">
    <property type="method" value="X-ray"/>
    <property type="resolution" value="2.10 A"/>
    <property type="chains" value="A/B/C/D=1-702"/>
</dbReference>
<dbReference type="PDBsum" id="4RKM"/>
<dbReference type="PDBsum" id="4RKN"/>
<dbReference type="SMR" id="Q7MSJ8"/>
<dbReference type="DIP" id="DIP-61512N"/>
<dbReference type="STRING" id="273121.WS0379"/>
<dbReference type="KEGG" id="wsu:WS0379"/>
<dbReference type="eggNOG" id="COG0484">
    <property type="taxonomic scope" value="Bacteria"/>
</dbReference>
<dbReference type="HOGENOM" id="CLU_406457_0_0_7"/>
<dbReference type="BioCyc" id="MetaCyc:MONOMER-20223"/>
<dbReference type="BRENDA" id="1.8.99.5">
    <property type="organism ID" value="6642"/>
</dbReference>
<dbReference type="SABIO-RK" id="Q7MSJ8"/>
<dbReference type="UniPathway" id="UPA00370"/>
<dbReference type="EvolutionaryTrace" id="Q7MSJ8"/>
<dbReference type="Proteomes" id="UP000000422">
    <property type="component" value="Chromosome"/>
</dbReference>
<dbReference type="GO" id="GO:0042597">
    <property type="term" value="C:periplasmic space"/>
    <property type="evidence" value="ECO:0007669"/>
    <property type="project" value="UniProtKB-SubCell"/>
</dbReference>
<dbReference type="GO" id="GO:1903136">
    <property type="term" value="F:cuprous ion binding"/>
    <property type="evidence" value="ECO:0000314"/>
    <property type="project" value="UniProtKB"/>
</dbReference>
<dbReference type="GO" id="GO:0020037">
    <property type="term" value="F:heme binding"/>
    <property type="evidence" value="ECO:0000314"/>
    <property type="project" value="UniProtKB"/>
</dbReference>
<dbReference type="GO" id="GO:0042802">
    <property type="term" value="F:identical protein binding"/>
    <property type="evidence" value="ECO:0000353"/>
    <property type="project" value="IntAct"/>
</dbReference>
<dbReference type="GO" id="GO:0016667">
    <property type="term" value="F:oxidoreductase activity, acting on a sulfur group of donors"/>
    <property type="evidence" value="ECO:0000314"/>
    <property type="project" value="UniProtKB"/>
</dbReference>
<dbReference type="GO" id="GO:0016002">
    <property type="term" value="F:sulfite reductase activity"/>
    <property type="evidence" value="ECO:0000314"/>
    <property type="project" value="UniProtKB"/>
</dbReference>
<dbReference type="GO" id="GO:0009061">
    <property type="term" value="P:anaerobic respiration"/>
    <property type="evidence" value="ECO:0007669"/>
    <property type="project" value="UniProtKB-KW"/>
</dbReference>
<dbReference type="GO" id="GO:0070814">
    <property type="term" value="P:hydrogen sulfide biosynthetic process"/>
    <property type="evidence" value="ECO:0000314"/>
    <property type="project" value="UniProtKB"/>
</dbReference>
<dbReference type="GO" id="GO:0070207">
    <property type="term" value="P:protein homotrimerization"/>
    <property type="evidence" value="ECO:0000314"/>
    <property type="project" value="UniProtKB"/>
</dbReference>
<dbReference type="Gene3D" id="1.20.140.10">
    <property type="entry name" value="Butyryl-CoA Dehydrogenase, subunit A, domain 3"/>
    <property type="match status" value="1"/>
</dbReference>
<dbReference type="Gene3D" id="3.90.10.10">
    <property type="entry name" value="Cytochrome C3"/>
    <property type="match status" value="2"/>
</dbReference>
<dbReference type="Gene3D" id="1.10.1130.10">
    <property type="entry name" value="Flavocytochrome C3, Chain A"/>
    <property type="match status" value="1"/>
</dbReference>
<dbReference type="HAMAP" id="MF_02023">
    <property type="entry name" value="Sulfite_red"/>
    <property type="match status" value="1"/>
</dbReference>
<dbReference type="InterPro" id="IPR036280">
    <property type="entry name" value="Multihaem_cyt_sf"/>
</dbReference>
<dbReference type="InterPro" id="IPR051829">
    <property type="entry name" value="Multiheme_Cytochr_ET"/>
</dbReference>
<dbReference type="InterPro" id="IPR032897">
    <property type="entry name" value="Sulfite_reductase"/>
</dbReference>
<dbReference type="PANTHER" id="PTHR35038:SF8">
    <property type="entry name" value="C-TYPE POLYHEME CYTOCHROME OMCC"/>
    <property type="match status" value="1"/>
</dbReference>
<dbReference type="PANTHER" id="PTHR35038">
    <property type="entry name" value="DISSIMILATORY SULFITE REDUCTASE SIRA"/>
    <property type="match status" value="1"/>
</dbReference>
<dbReference type="SUPFAM" id="SSF48695">
    <property type="entry name" value="Multiheme cytochromes"/>
    <property type="match status" value="1"/>
</dbReference>
<dbReference type="PROSITE" id="PS51008">
    <property type="entry name" value="MULTIHEME_CYTC"/>
    <property type="match status" value="2"/>
</dbReference>
<gene>
    <name evidence="4 5" type="primary">mccA</name>
    <name evidence="8" type="ordered locus">WS0379</name>
</gene>
<evidence type="ECO:0000269" key="1">
    <source>
    </source>
</evidence>
<evidence type="ECO:0000269" key="2">
    <source>
    </source>
</evidence>
<evidence type="ECO:0000269" key="3">
    <source>
    </source>
</evidence>
<evidence type="ECO:0000303" key="4">
    <source>
    </source>
</evidence>
<evidence type="ECO:0000303" key="5">
    <source>
    </source>
</evidence>
<evidence type="ECO:0000305" key="6"/>
<evidence type="ECO:0000305" key="7">
    <source>
    </source>
</evidence>
<evidence type="ECO:0000312" key="8">
    <source>
        <dbReference type="EMBL" id="CAE09526.1"/>
    </source>
</evidence>
<evidence type="ECO:0000312" key="9">
    <source>
        <dbReference type="Proteomes" id="UP000000422"/>
    </source>
</evidence>
<evidence type="ECO:0007744" key="10">
    <source>
        <dbReference type="PDB" id="4RKM"/>
    </source>
</evidence>
<evidence type="ECO:0007744" key="11">
    <source>
        <dbReference type="PDB" id="4RKN"/>
    </source>
</evidence>
<evidence type="ECO:0007829" key="12">
    <source>
        <dbReference type="PDB" id="4RKN"/>
    </source>
</evidence>
<reference key="1">
    <citation type="journal article" date="2003" name="Proc. Natl. Acad. Sci. U.S.A.">
        <title>Complete genome sequence and analysis of Wolinella succinogenes.</title>
        <authorList>
            <person name="Baar C."/>
            <person name="Eppinger M."/>
            <person name="Raddatz G."/>
            <person name="Simon J."/>
            <person name="Lanz C."/>
            <person name="Klimmek O."/>
            <person name="Nandakumar R."/>
            <person name="Gross R."/>
            <person name="Rosinus A."/>
            <person name="Keller H."/>
            <person name="Jagtap P."/>
            <person name="Linke B."/>
            <person name="Meyer F."/>
            <person name="Lederer H."/>
            <person name="Schuster S.C."/>
        </authorList>
    </citation>
    <scope>NUCLEOTIDE SEQUENCE [LARGE SCALE GENOMIC DNA]</scope>
    <source>
        <strain evidence="9">ATCC 29543 / DSM 1740 / CCUG 13145 / JCM 31913 / LMG 7466 / NCTC 11488 / FDC 602W</strain>
    </source>
</reference>
<reference key="2">
    <citation type="journal article" date="2007" name="Mol. Microbiol.">
        <title>A dedicated haem lyase is required for the maturation of a novel bacterial cytochrome c with unconventional covalent haem binding.</title>
        <authorList>
            <person name="Hartshorne R.S."/>
            <person name="Kern M."/>
            <person name="Meyer B."/>
            <person name="Clarke T.A."/>
            <person name="Karas M."/>
            <person name="Richardson D.J."/>
            <person name="Simon J."/>
        </authorList>
    </citation>
    <scope>IDENTIFICATION BY MASS SPECTROMETRY</scope>
    <scope>COFACTOR</scope>
    <scope>SUBUNIT</scope>
    <scope>SIGNAL PEPTIDE</scope>
    <scope>SUBCELLULAR LOCATION</scope>
</reference>
<reference key="3">
    <citation type="journal article" date="2011" name="Mol. Microbiol.">
        <title>The Wolinella succinogenes mcc gene cluster encodes an unconventional respiratory sulphite reduction system.</title>
        <authorList>
            <person name="Kern M."/>
            <person name="Klotz M.G."/>
            <person name="Simon J."/>
        </authorList>
    </citation>
    <scope>FUNCTION</scope>
    <scope>CATALYTIC ACTIVITY</scope>
    <scope>COFACTOR</scope>
    <scope>INDUCTION BY SULFITE</scope>
    <scope>DISRUPTION PHENOTYPE</scope>
    <scope>MUTAGENESIS OF CYS-574; ALA-587; CYS-590 AND HIS-591</scope>
</reference>
<reference evidence="10 11" key="4">
    <citation type="journal article" date="2015" name="Nature">
        <title>The octahaem MccA is a haem c-copper sulfite reductase.</title>
        <authorList>
            <person name="Hermann B."/>
            <person name="Kern M."/>
            <person name="La Pietra L."/>
            <person name="Simon J."/>
            <person name="Einsle O."/>
        </authorList>
    </citation>
    <scope>X-RAY CRYSTALLOGRAPHY (2.10 ANGSTROMS) IN COMPLEX WITH HEME; HYDROGEN SULFITE AND COPPER IONS</scope>
    <scope>CATALYTIC ACTIVITY</scope>
    <scope>BIOPHYSICOCHEMICAL PROPERTIES</scope>
    <scope>COFACTOR</scope>
    <scope>SUBUNIT</scope>
</reference>
<keyword id="KW-0002">3D-structure</keyword>
<keyword id="KW-0186">Copper</keyword>
<keyword id="KW-0249">Electron transport</keyword>
<keyword id="KW-0349">Heme</keyword>
<keyword id="KW-0408">Iron</keyword>
<keyword id="KW-0479">Metal-binding</keyword>
<keyword id="KW-0560">Oxidoreductase</keyword>
<keyword id="KW-0574">Periplasm</keyword>
<keyword id="KW-1185">Reference proteome</keyword>
<keyword id="KW-0732">Signal</keyword>
<keyword id="KW-0763">Sulfate respiration</keyword>
<keyword id="KW-0813">Transport</keyword>
<organism evidence="9">
    <name type="scientific">Wolinella succinogenes (strain ATCC 29543 / DSM 1740 / CCUG 13145 / JCM 31913 / LMG 7466 / NCTC 11488 / FDC 602W)</name>
    <name type="common">Vibrio succinogenes</name>
    <dbReference type="NCBI Taxonomy" id="273121"/>
    <lineage>
        <taxon>Bacteria</taxon>
        <taxon>Pseudomonadati</taxon>
        <taxon>Campylobacterota</taxon>
        <taxon>Epsilonproteobacteria</taxon>
        <taxon>Campylobacterales</taxon>
        <taxon>Helicobacteraceae</taxon>
        <taxon>Wolinella</taxon>
    </lineage>
</organism>